<reference key="1">
    <citation type="journal article" date="2008" name="BMC Genomics">
        <title>The linear chromosome of the plant-pathogenic mycoplasma 'Candidatus Phytoplasma mali'.</title>
        <authorList>
            <person name="Kube M."/>
            <person name="Schneider B."/>
            <person name="Kuhl H."/>
            <person name="Dandekar T."/>
            <person name="Heitmann K."/>
            <person name="Migdoll A.M."/>
            <person name="Reinhardt R."/>
            <person name="Seemueller E."/>
        </authorList>
    </citation>
    <scope>NUCLEOTIDE SEQUENCE [LARGE SCALE GENOMIC DNA]</scope>
    <source>
        <strain>AT</strain>
    </source>
</reference>
<comment type="function">
    <text evidence="1">One of the primary rRNA binding proteins, it binds directly to 16S rRNA where it nucleates assembly of the head domain of the 30S subunit. Is located at the subunit interface close to the decoding center, probably blocks exit of the E-site tRNA.</text>
</comment>
<comment type="subunit">
    <text evidence="1">Part of the 30S ribosomal subunit. Contacts proteins S9 and S11.</text>
</comment>
<comment type="similarity">
    <text evidence="1">Belongs to the universal ribosomal protein uS7 family.</text>
</comment>
<proteinExistence type="inferred from homology"/>
<gene>
    <name evidence="1" type="primary">rpsG</name>
    <name type="ordered locus">ATP_00393</name>
</gene>
<accession>B3QZH3</accession>
<evidence type="ECO:0000255" key="1">
    <source>
        <dbReference type="HAMAP-Rule" id="MF_00480"/>
    </source>
</evidence>
<evidence type="ECO:0000305" key="2"/>
<keyword id="KW-1185">Reference proteome</keyword>
<keyword id="KW-0687">Ribonucleoprotein</keyword>
<keyword id="KW-0689">Ribosomal protein</keyword>
<keyword id="KW-0694">RNA-binding</keyword>
<keyword id="KW-0699">rRNA-binding</keyword>
<keyword id="KW-0820">tRNA-binding</keyword>
<sequence>MPRKKSINKRDVLPDVFYNSKLVTKTINTIMKDGKKATAQAILYGAFNKVKEITQREPIIVFDEALKNIMPELEVRSRRIGGQKYQIPSEVRPERKQSLGLRWLVQFAQKRNEKTMQQKLAKEIIDAASGNGLAVKKREEIHRMAEANKSFAHYRW</sequence>
<organism>
    <name type="scientific">Phytoplasma mali (strain AT)</name>
    <dbReference type="NCBI Taxonomy" id="482235"/>
    <lineage>
        <taxon>Bacteria</taxon>
        <taxon>Bacillati</taxon>
        <taxon>Mycoplasmatota</taxon>
        <taxon>Mollicutes</taxon>
        <taxon>Acholeplasmatales</taxon>
        <taxon>Acholeplasmataceae</taxon>
        <taxon>Candidatus Phytoplasma</taxon>
        <taxon>16SrX (Apple proliferation group)</taxon>
    </lineage>
</organism>
<protein>
    <recommendedName>
        <fullName evidence="1">Small ribosomal subunit protein uS7</fullName>
    </recommendedName>
    <alternativeName>
        <fullName evidence="2">30S ribosomal protein S7</fullName>
    </alternativeName>
</protein>
<name>RS7_PHYMT</name>
<feature type="chain" id="PRO_1000135617" description="Small ribosomal subunit protein uS7">
    <location>
        <begin position="1"/>
        <end position="156"/>
    </location>
</feature>
<dbReference type="EMBL" id="CU469464">
    <property type="protein sequence ID" value="CAP18580.1"/>
    <property type="molecule type" value="Genomic_DNA"/>
</dbReference>
<dbReference type="SMR" id="B3QZH3"/>
<dbReference type="STRING" id="37692.ATP_00393"/>
<dbReference type="KEGG" id="pml:ATP_00393"/>
<dbReference type="eggNOG" id="COG0049">
    <property type="taxonomic scope" value="Bacteria"/>
</dbReference>
<dbReference type="HOGENOM" id="CLU_072226_1_1_14"/>
<dbReference type="Proteomes" id="UP000002020">
    <property type="component" value="Chromosome"/>
</dbReference>
<dbReference type="GO" id="GO:0015935">
    <property type="term" value="C:small ribosomal subunit"/>
    <property type="evidence" value="ECO:0007669"/>
    <property type="project" value="InterPro"/>
</dbReference>
<dbReference type="GO" id="GO:0019843">
    <property type="term" value="F:rRNA binding"/>
    <property type="evidence" value="ECO:0007669"/>
    <property type="project" value="UniProtKB-UniRule"/>
</dbReference>
<dbReference type="GO" id="GO:0003735">
    <property type="term" value="F:structural constituent of ribosome"/>
    <property type="evidence" value="ECO:0007669"/>
    <property type="project" value="InterPro"/>
</dbReference>
<dbReference type="GO" id="GO:0000049">
    <property type="term" value="F:tRNA binding"/>
    <property type="evidence" value="ECO:0007669"/>
    <property type="project" value="UniProtKB-UniRule"/>
</dbReference>
<dbReference type="GO" id="GO:0006412">
    <property type="term" value="P:translation"/>
    <property type="evidence" value="ECO:0007669"/>
    <property type="project" value="UniProtKB-UniRule"/>
</dbReference>
<dbReference type="CDD" id="cd14869">
    <property type="entry name" value="uS7_Bacteria"/>
    <property type="match status" value="1"/>
</dbReference>
<dbReference type="FunFam" id="1.10.455.10:FF:000001">
    <property type="entry name" value="30S ribosomal protein S7"/>
    <property type="match status" value="1"/>
</dbReference>
<dbReference type="Gene3D" id="1.10.455.10">
    <property type="entry name" value="Ribosomal protein S7 domain"/>
    <property type="match status" value="1"/>
</dbReference>
<dbReference type="HAMAP" id="MF_00480_B">
    <property type="entry name" value="Ribosomal_uS7_B"/>
    <property type="match status" value="1"/>
</dbReference>
<dbReference type="InterPro" id="IPR000235">
    <property type="entry name" value="Ribosomal_uS7"/>
</dbReference>
<dbReference type="InterPro" id="IPR005717">
    <property type="entry name" value="Ribosomal_uS7_bac/org-type"/>
</dbReference>
<dbReference type="InterPro" id="IPR020606">
    <property type="entry name" value="Ribosomal_uS7_CS"/>
</dbReference>
<dbReference type="InterPro" id="IPR023798">
    <property type="entry name" value="Ribosomal_uS7_dom"/>
</dbReference>
<dbReference type="InterPro" id="IPR036823">
    <property type="entry name" value="Ribosomal_uS7_dom_sf"/>
</dbReference>
<dbReference type="NCBIfam" id="TIGR01029">
    <property type="entry name" value="rpsG_bact"/>
    <property type="match status" value="1"/>
</dbReference>
<dbReference type="PANTHER" id="PTHR11205">
    <property type="entry name" value="RIBOSOMAL PROTEIN S7"/>
    <property type="match status" value="1"/>
</dbReference>
<dbReference type="Pfam" id="PF00177">
    <property type="entry name" value="Ribosomal_S7"/>
    <property type="match status" value="1"/>
</dbReference>
<dbReference type="PIRSF" id="PIRSF002122">
    <property type="entry name" value="RPS7p_RPS7a_RPS5e_RPS7o"/>
    <property type="match status" value="1"/>
</dbReference>
<dbReference type="SUPFAM" id="SSF47973">
    <property type="entry name" value="Ribosomal protein S7"/>
    <property type="match status" value="1"/>
</dbReference>
<dbReference type="PROSITE" id="PS00052">
    <property type="entry name" value="RIBOSOMAL_S7"/>
    <property type="match status" value="1"/>
</dbReference>